<keyword id="KW-0963">Cytoplasm</keyword>
<keyword id="KW-0333">Golgi apparatus</keyword>
<keyword id="KW-0539">Nucleus</keyword>
<keyword id="KW-0597">Phosphoprotein</keyword>
<keyword id="KW-1185">Reference proteome</keyword>
<comment type="function">
    <text evidence="3 7">Regulates the mitotic activity in roots. Plays a role with HSP70-1 in facilitating WIT1 nuclear envelope targeting.</text>
</comment>
<comment type="subunit">
    <text evidence="1 4 5 6 7">Binds to FPP proteins (By similarity). Interacts with WAP, WIP1, WIP2 and WIP3 through its WPP domain. Interacts with WIT1 and HSP70-1.</text>
</comment>
<comment type="subcellular location">
    <subcellularLocation>
        <location evidence="3">Nucleus envelope</location>
    </subcellularLocation>
    <subcellularLocation>
        <location evidence="3">Cytoplasm</location>
    </subcellularLocation>
    <subcellularLocation>
        <location evidence="3">Nucleus</location>
    </subcellularLocation>
    <subcellularLocation>
        <location evidence="1">Golgi apparatus</location>
    </subcellularLocation>
    <text evidence="1">Associated to the nuclear envelope (NE) in undifferentiated cells of the root tip. Associated with the outer NE and the nuclear pores in interphase cells and with the immature cell plate during cytokinesis. In differentiated cells, localized in both cytoplasm and nucleus. Accumulate in speckles of the cytoplasm belonging to the Golgi apparatus (By similarity). Appears at the NE as cells reenter the cell cycle during dedifferentiation.</text>
</comment>
<comment type="tissue specificity">
    <text evidence="3">Expressed in roots, stems, leaves and flowers.</text>
</comment>
<comment type="domain">
    <text evidence="1">The WPP domain is required for the nuclear envelope localization.</text>
</comment>
<reference key="1">
    <citation type="journal article" date="2000" name="Nature">
        <title>Sequence and analysis of chromosome 1 of the plant Arabidopsis thaliana.</title>
        <authorList>
            <person name="Theologis A."/>
            <person name="Ecker J.R."/>
            <person name="Palm C.J."/>
            <person name="Federspiel N.A."/>
            <person name="Kaul S."/>
            <person name="White O."/>
            <person name="Alonso J."/>
            <person name="Altafi H."/>
            <person name="Araujo R."/>
            <person name="Bowman C.L."/>
            <person name="Brooks S.Y."/>
            <person name="Buehler E."/>
            <person name="Chan A."/>
            <person name="Chao Q."/>
            <person name="Chen H."/>
            <person name="Cheuk R.F."/>
            <person name="Chin C.W."/>
            <person name="Chung M.K."/>
            <person name="Conn L."/>
            <person name="Conway A.B."/>
            <person name="Conway A.R."/>
            <person name="Creasy T.H."/>
            <person name="Dewar K."/>
            <person name="Dunn P."/>
            <person name="Etgu P."/>
            <person name="Feldblyum T.V."/>
            <person name="Feng J.-D."/>
            <person name="Fong B."/>
            <person name="Fujii C.Y."/>
            <person name="Gill J.E."/>
            <person name="Goldsmith A.D."/>
            <person name="Haas B."/>
            <person name="Hansen N.F."/>
            <person name="Hughes B."/>
            <person name="Huizar L."/>
            <person name="Hunter J.L."/>
            <person name="Jenkins J."/>
            <person name="Johnson-Hopson C."/>
            <person name="Khan S."/>
            <person name="Khaykin E."/>
            <person name="Kim C.J."/>
            <person name="Koo H.L."/>
            <person name="Kremenetskaia I."/>
            <person name="Kurtz D.B."/>
            <person name="Kwan A."/>
            <person name="Lam B."/>
            <person name="Langin-Hooper S."/>
            <person name="Lee A."/>
            <person name="Lee J.M."/>
            <person name="Lenz C.A."/>
            <person name="Li J.H."/>
            <person name="Li Y.-P."/>
            <person name="Lin X."/>
            <person name="Liu S.X."/>
            <person name="Liu Z.A."/>
            <person name="Luros J.S."/>
            <person name="Maiti R."/>
            <person name="Marziali A."/>
            <person name="Militscher J."/>
            <person name="Miranda M."/>
            <person name="Nguyen M."/>
            <person name="Nierman W.C."/>
            <person name="Osborne B.I."/>
            <person name="Pai G."/>
            <person name="Peterson J."/>
            <person name="Pham P.K."/>
            <person name="Rizzo M."/>
            <person name="Rooney T."/>
            <person name="Rowley D."/>
            <person name="Sakano H."/>
            <person name="Salzberg S.L."/>
            <person name="Schwartz J.R."/>
            <person name="Shinn P."/>
            <person name="Southwick A.M."/>
            <person name="Sun H."/>
            <person name="Tallon L.J."/>
            <person name="Tambunga G."/>
            <person name="Toriumi M.J."/>
            <person name="Town C.D."/>
            <person name="Utterback T."/>
            <person name="Van Aken S."/>
            <person name="Vaysberg M."/>
            <person name="Vysotskaia V.S."/>
            <person name="Walker M."/>
            <person name="Wu D."/>
            <person name="Yu G."/>
            <person name="Fraser C.M."/>
            <person name="Venter J.C."/>
            <person name="Davis R.W."/>
        </authorList>
    </citation>
    <scope>NUCLEOTIDE SEQUENCE [LARGE SCALE GENOMIC DNA]</scope>
    <source>
        <strain>cv. Columbia</strain>
    </source>
</reference>
<reference key="2">
    <citation type="journal article" date="2017" name="Plant J.">
        <title>Araport11: a complete reannotation of the Arabidopsis thaliana reference genome.</title>
        <authorList>
            <person name="Cheng C.Y."/>
            <person name="Krishnakumar V."/>
            <person name="Chan A.P."/>
            <person name="Thibaud-Nissen F."/>
            <person name="Schobel S."/>
            <person name="Town C.D."/>
        </authorList>
    </citation>
    <scope>GENOME REANNOTATION</scope>
    <source>
        <strain>cv. Columbia</strain>
    </source>
</reference>
<reference key="3">
    <citation type="journal article" date="2003" name="Science">
        <title>Empirical analysis of transcriptional activity in the Arabidopsis genome.</title>
        <authorList>
            <person name="Yamada K."/>
            <person name="Lim J."/>
            <person name="Dale J.M."/>
            <person name="Chen H."/>
            <person name="Shinn P."/>
            <person name="Palm C.J."/>
            <person name="Southwick A.M."/>
            <person name="Wu H.C."/>
            <person name="Kim C.J."/>
            <person name="Nguyen M."/>
            <person name="Pham P.K."/>
            <person name="Cheuk R.F."/>
            <person name="Karlin-Newmann G."/>
            <person name="Liu S.X."/>
            <person name="Lam B."/>
            <person name="Sakano H."/>
            <person name="Wu T."/>
            <person name="Yu G."/>
            <person name="Miranda M."/>
            <person name="Quach H.L."/>
            <person name="Tripp M."/>
            <person name="Chang C.H."/>
            <person name="Lee J.M."/>
            <person name="Toriumi M.J."/>
            <person name="Chan M.M."/>
            <person name="Tang C.C."/>
            <person name="Onodera C.S."/>
            <person name="Deng J.M."/>
            <person name="Akiyama K."/>
            <person name="Ansari Y."/>
            <person name="Arakawa T."/>
            <person name="Banh J."/>
            <person name="Banno F."/>
            <person name="Bowser L."/>
            <person name="Brooks S.Y."/>
            <person name="Carninci P."/>
            <person name="Chao Q."/>
            <person name="Choy N."/>
            <person name="Enju A."/>
            <person name="Goldsmith A.D."/>
            <person name="Gurjal M."/>
            <person name="Hansen N.F."/>
            <person name="Hayashizaki Y."/>
            <person name="Johnson-Hopson C."/>
            <person name="Hsuan V.W."/>
            <person name="Iida K."/>
            <person name="Karnes M."/>
            <person name="Khan S."/>
            <person name="Koesema E."/>
            <person name="Ishida J."/>
            <person name="Jiang P.X."/>
            <person name="Jones T."/>
            <person name="Kawai J."/>
            <person name="Kamiya A."/>
            <person name="Meyers C."/>
            <person name="Nakajima M."/>
            <person name="Narusaka M."/>
            <person name="Seki M."/>
            <person name="Sakurai T."/>
            <person name="Satou M."/>
            <person name="Tamse R."/>
            <person name="Vaysberg M."/>
            <person name="Wallender E.K."/>
            <person name="Wong C."/>
            <person name="Yamamura Y."/>
            <person name="Yuan S."/>
            <person name="Shinozaki K."/>
            <person name="Davis R.W."/>
            <person name="Theologis A."/>
            <person name="Ecker J.R."/>
        </authorList>
    </citation>
    <scope>NUCLEOTIDE SEQUENCE [LARGE SCALE MRNA]</scope>
    <source>
        <strain>cv. Columbia</strain>
    </source>
</reference>
<reference key="4">
    <citation type="submission" date="2002-03" db="EMBL/GenBank/DDBJ databases">
        <title>Full-length cDNA from Arabidopsis thaliana.</title>
        <authorList>
            <person name="Brover V.V."/>
            <person name="Troukhan M.E."/>
            <person name="Alexandrov N.A."/>
            <person name="Lu Y.-P."/>
            <person name="Flavell R.B."/>
            <person name="Feldmann K.A."/>
        </authorList>
    </citation>
    <scope>NUCLEOTIDE SEQUENCE [LARGE SCALE MRNA]</scope>
</reference>
<reference key="5">
    <citation type="journal article" date="2004" name="Plant Cell">
        <title>Arabidopsis WPP-domain proteins are developmentally associated with the nuclear envelope and promote cell division.</title>
        <authorList>
            <person name="Patel S."/>
            <person name="Rose A."/>
            <person name="Meulia T."/>
            <person name="Dixit R."/>
            <person name="Cyr R.J."/>
            <person name="Meier I."/>
        </authorList>
    </citation>
    <scope>FUNCTION</scope>
    <scope>TISSUE SPECIFICITY</scope>
    <scope>SUBCELLULAR LOCATION</scope>
</reference>
<reference key="6">
    <citation type="journal article" date="2005" name="Planta">
        <title>The plant nuclear envelope protein MAF1 has an additional location at the Golgi and binds to a novel Golgi-associated coiled-coil protein.</title>
        <authorList>
            <person name="Patel S."/>
            <person name="Brkljacic J."/>
            <person name="Gindullis F."/>
            <person name="Rose A."/>
            <person name="Meier I."/>
        </authorList>
    </citation>
    <scope>INTERACTION WITH WAP</scope>
</reference>
<reference key="7">
    <citation type="journal article" date="2007" name="Curr. Biol.">
        <title>Anchorage of plant RanGAP to the nuclear envelope involves novel nuclear-pore-associated proteins.</title>
        <authorList>
            <person name="Xu X.M."/>
            <person name="Meulia T."/>
            <person name="Meier I."/>
        </authorList>
    </citation>
    <scope>INTERACTION WITH WIP1; WIP2 AND WIP3</scope>
</reference>
<reference key="8">
    <citation type="journal article" date="2008" name="Plant Cell">
        <title>Two distinct interacting classes of nuclear envelope-associated coiled-coil proteins are required for the tissue-specific nuclear envelope targeting of Arabidopsis RanGAP.</title>
        <authorList>
            <person name="Zhao Q."/>
            <person name="Brkljacic J."/>
            <person name="Meier I."/>
        </authorList>
    </citation>
    <scope>INTERACTION WITH WIT1</scope>
</reference>
<reference key="9">
    <citation type="journal article" date="2009" name="Plant Physiol.">
        <title>Large-scale Arabidopsis phosphoproteome profiling reveals novel chloroplast kinase substrates and phosphorylation networks.</title>
        <authorList>
            <person name="Reiland S."/>
            <person name="Messerli G."/>
            <person name="Baerenfaller K."/>
            <person name="Gerrits B."/>
            <person name="Endler A."/>
            <person name="Grossmann J."/>
            <person name="Gruissem W."/>
            <person name="Baginsky S."/>
        </authorList>
    </citation>
    <scope>PHOSPHORYLATION [LARGE SCALE ANALYSIS] AT SER-173</scope>
    <scope>IDENTIFICATION BY MASS SPECTROMETRY [LARGE SCALE ANALYSIS]</scope>
</reference>
<reference key="10">
    <citation type="journal article" date="2009" name="Plant Physiol.">
        <title>WPP-domain proteins mimic the activity of the HSC70-1 chaperone in preventing mistargeting of RanGAP1-anchoring protein WIT1.</title>
        <authorList>
            <person name="Brkljacic J."/>
            <person name="Zhao Q."/>
            <person name="Meier I."/>
        </authorList>
    </citation>
    <scope>INTERACTION WITH WIT1 AND HSP70-1</scope>
    <scope>FUNCTION</scope>
</reference>
<protein>
    <recommendedName>
        <fullName>WPP domain-containing protein 2</fullName>
    </recommendedName>
    <alternativeName>
        <fullName>MFP1 attachment factor 2</fullName>
    </alternativeName>
</protein>
<sequence>MAETAETINTTISSPPPESESSTTISAMTDPTSQEAASKDTDLTKEAESEKKPGGISLRIWPPTQKTRDAVLNRLIETLSTESILSKRYGTLKSDDATTVAKLIEEEAYGVASNAVSSDDDGIKILELYSKEISKRMLESVKARSNASVGNGSVEDANTDASEVSKDDAGPASEEEKSEA</sequence>
<accession>Q9C500</accession>
<accession>Q8LE13</accession>
<proteinExistence type="evidence at protein level"/>
<dbReference type="EMBL" id="AC079677">
    <property type="protein sequence ID" value="AAG52640.1"/>
    <property type="molecule type" value="Genomic_DNA"/>
</dbReference>
<dbReference type="EMBL" id="AC083835">
    <property type="protein sequence ID" value="AAG50616.1"/>
    <property type="molecule type" value="Genomic_DNA"/>
</dbReference>
<dbReference type="EMBL" id="CP002684">
    <property type="protein sequence ID" value="AEE32136.1"/>
    <property type="molecule type" value="Genomic_DNA"/>
</dbReference>
<dbReference type="EMBL" id="AY072148">
    <property type="protein sequence ID" value="AAL59970.1"/>
    <property type="molecule type" value="mRNA"/>
</dbReference>
<dbReference type="EMBL" id="AY096476">
    <property type="protein sequence ID" value="AAM20116.1"/>
    <property type="molecule type" value="mRNA"/>
</dbReference>
<dbReference type="EMBL" id="AY085683">
    <property type="protein sequence ID" value="AAM62902.1"/>
    <property type="molecule type" value="mRNA"/>
</dbReference>
<dbReference type="PIR" id="F96512">
    <property type="entry name" value="F96512"/>
</dbReference>
<dbReference type="RefSeq" id="NP_564498.1">
    <property type="nucleotide sequence ID" value="NM_103613.3"/>
</dbReference>
<dbReference type="SMR" id="Q9C500"/>
<dbReference type="BioGRID" id="26348">
    <property type="interactions" value="11"/>
</dbReference>
<dbReference type="FunCoup" id="Q9C500">
    <property type="interactions" value="1847"/>
</dbReference>
<dbReference type="IntAct" id="Q9C500">
    <property type="interactions" value="6"/>
</dbReference>
<dbReference type="STRING" id="3702.Q9C500"/>
<dbReference type="iPTMnet" id="Q9C500"/>
<dbReference type="PaxDb" id="3702-AT1G47200.1"/>
<dbReference type="ProteomicsDB" id="242550"/>
<dbReference type="EnsemblPlants" id="AT1G47200.1">
    <property type="protein sequence ID" value="AT1G47200.1"/>
    <property type="gene ID" value="AT1G47200"/>
</dbReference>
<dbReference type="GeneID" id="841123"/>
<dbReference type="Gramene" id="AT1G47200.1">
    <property type="protein sequence ID" value="AT1G47200.1"/>
    <property type="gene ID" value="AT1G47200"/>
</dbReference>
<dbReference type="KEGG" id="ath:AT1G47200"/>
<dbReference type="Araport" id="AT1G47200"/>
<dbReference type="TAIR" id="AT1G47200">
    <property type="gene designation" value="WPP2"/>
</dbReference>
<dbReference type="eggNOG" id="ENOG502S3QB">
    <property type="taxonomic scope" value="Eukaryota"/>
</dbReference>
<dbReference type="HOGENOM" id="CLU_101563_1_0_1"/>
<dbReference type="InParanoid" id="Q9C500"/>
<dbReference type="OMA" id="FAVWPPT"/>
<dbReference type="PhylomeDB" id="Q9C500"/>
<dbReference type="PRO" id="PR:Q9C500"/>
<dbReference type="Proteomes" id="UP000006548">
    <property type="component" value="Chromosome 1"/>
</dbReference>
<dbReference type="ExpressionAtlas" id="Q9C500">
    <property type="expression patterns" value="baseline and differential"/>
</dbReference>
<dbReference type="GO" id="GO:0005794">
    <property type="term" value="C:Golgi apparatus"/>
    <property type="evidence" value="ECO:0007669"/>
    <property type="project" value="UniProtKB-SubCell"/>
</dbReference>
<dbReference type="GO" id="GO:0005640">
    <property type="term" value="C:nuclear outer membrane"/>
    <property type="evidence" value="ECO:0000314"/>
    <property type="project" value="TAIR"/>
</dbReference>
<dbReference type="GO" id="GO:0005634">
    <property type="term" value="C:nucleus"/>
    <property type="evidence" value="ECO:0007005"/>
    <property type="project" value="TAIR"/>
</dbReference>
<dbReference type="GO" id="GO:0048527">
    <property type="term" value="P:lateral root development"/>
    <property type="evidence" value="ECO:0000315"/>
    <property type="project" value="TAIR"/>
</dbReference>
<dbReference type="GO" id="GO:0000278">
    <property type="term" value="P:mitotic cell cycle"/>
    <property type="evidence" value="ECO:0000315"/>
    <property type="project" value="TAIR"/>
</dbReference>
<dbReference type="Gene3D" id="1.10.246.200">
    <property type="entry name" value="WPP domain"/>
    <property type="match status" value="1"/>
</dbReference>
<dbReference type="InterPro" id="IPR044692">
    <property type="entry name" value="WPP1/2/3"/>
</dbReference>
<dbReference type="InterPro" id="IPR025265">
    <property type="entry name" value="WPP_dom"/>
</dbReference>
<dbReference type="InterPro" id="IPR038214">
    <property type="entry name" value="WPP_sf"/>
</dbReference>
<dbReference type="PANTHER" id="PTHR34362">
    <property type="entry name" value="WPP DOMAIN-CONTAINING PROTEIN 1-RELATED"/>
    <property type="match status" value="1"/>
</dbReference>
<dbReference type="PANTHER" id="PTHR34362:SF1">
    <property type="entry name" value="WPP DOMAIN-CONTAINING PROTEIN 1-RELATED"/>
    <property type="match status" value="1"/>
</dbReference>
<dbReference type="Pfam" id="PF13943">
    <property type="entry name" value="WPP"/>
    <property type="match status" value="1"/>
</dbReference>
<gene>
    <name type="primary">WPP2</name>
    <name type="synonym">MAF2</name>
    <name type="ordered locus">At1g47200</name>
    <name type="ORF">F2G19.18</name>
    <name type="ORF">F8G22.9</name>
</gene>
<name>WPP2_ARATH</name>
<feature type="chain" id="PRO_0000347192" description="WPP domain-containing protein 2">
    <location>
        <begin position="1"/>
        <end position="180"/>
    </location>
</feature>
<feature type="region of interest" description="Disordered" evidence="2">
    <location>
        <begin position="1"/>
        <end position="61"/>
    </location>
</feature>
<feature type="region of interest" description="WPP">
    <location>
        <begin position="44"/>
        <end position="147"/>
    </location>
</feature>
<feature type="region of interest" description="Disordered" evidence="2">
    <location>
        <begin position="140"/>
        <end position="180"/>
    </location>
</feature>
<feature type="compositionally biased region" description="Low complexity" evidence="2">
    <location>
        <begin position="1"/>
        <end position="26"/>
    </location>
</feature>
<feature type="compositionally biased region" description="Polar residues" evidence="2">
    <location>
        <begin position="27"/>
        <end position="36"/>
    </location>
</feature>
<feature type="compositionally biased region" description="Basic and acidic residues" evidence="2">
    <location>
        <begin position="37"/>
        <end position="53"/>
    </location>
</feature>
<feature type="modified residue" description="Phosphoserine" evidence="9">
    <location>
        <position position="173"/>
    </location>
</feature>
<feature type="sequence conflict" description="In Ref. 4; AAM62902." evidence="8" ref="4">
    <original>A</original>
    <variation>G</variation>
    <location>
        <position position="172"/>
    </location>
</feature>
<evidence type="ECO:0000250" key="1"/>
<evidence type="ECO:0000256" key="2">
    <source>
        <dbReference type="SAM" id="MobiDB-lite"/>
    </source>
</evidence>
<evidence type="ECO:0000269" key="3">
    <source>
    </source>
</evidence>
<evidence type="ECO:0000269" key="4">
    <source>
    </source>
</evidence>
<evidence type="ECO:0000269" key="5">
    <source>
    </source>
</evidence>
<evidence type="ECO:0000269" key="6">
    <source>
    </source>
</evidence>
<evidence type="ECO:0000269" key="7">
    <source>
    </source>
</evidence>
<evidence type="ECO:0000305" key="8"/>
<evidence type="ECO:0007744" key="9">
    <source>
    </source>
</evidence>
<organism>
    <name type="scientific">Arabidopsis thaliana</name>
    <name type="common">Mouse-ear cress</name>
    <dbReference type="NCBI Taxonomy" id="3702"/>
    <lineage>
        <taxon>Eukaryota</taxon>
        <taxon>Viridiplantae</taxon>
        <taxon>Streptophyta</taxon>
        <taxon>Embryophyta</taxon>
        <taxon>Tracheophyta</taxon>
        <taxon>Spermatophyta</taxon>
        <taxon>Magnoliopsida</taxon>
        <taxon>eudicotyledons</taxon>
        <taxon>Gunneridae</taxon>
        <taxon>Pentapetalae</taxon>
        <taxon>rosids</taxon>
        <taxon>malvids</taxon>
        <taxon>Brassicales</taxon>
        <taxon>Brassicaceae</taxon>
        <taxon>Camelineae</taxon>
        <taxon>Arabidopsis</taxon>
    </lineage>
</organism>